<keyword id="KW-0030">Aminoacyl-tRNA synthetase</keyword>
<keyword id="KW-0067">ATP-binding</keyword>
<keyword id="KW-0963">Cytoplasm</keyword>
<keyword id="KW-0436">Ligase</keyword>
<keyword id="KW-0547">Nucleotide-binding</keyword>
<keyword id="KW-0648">Protein biosynthesis</keyword>
<keyword id="KW-1185">Reference proteome</keyword>
<organism>
    <name type="scientific">Parabacteroides distasonis (strain ATCC 8503 / DSM 20701 / CIP 104284 / JCM 5825 / NCTC 11152)</name>
    <dbReference type="NCBI Taxonomy" id="435591"/>
    <lineage>
        <taxon>Bacteria</taxon>
        <taxon>Pseudomonadati</taxon>
        <taxon>Bacteroidota</taxon>
        <taxon>Bacteroidia</taxon>
        <taxon>Bacteroidales</taxon>
        <taxon>Tannerellaceae</taxon>
        <taxon>Parabacteroides</taxon>
    </lineage>
</organism>
<reference key="1">
    <citation type="journal article" date="2007" name="PLoS Biol.">
        <title>Evolution of symbiotic bacteria in the distal human intestine.</title>
        <authorList>
            <person name="Xu J."/>
            <person name="Mahowald M.A."/>
            <person name="Ley R.E."/>
            <person name="Lozupone C.A."/>
            <person name="Hamady M."/>
            <person name="Martens E.C."/>
            <person name="Henrissat B."/>
            <person name="Coutinho P.M."/>
            <person name="Minx P."/>
            <person name="Latreille P."/>
            <person name="Cordum H."/>
            <person name="Van Brunt A."/>
            <person name="Kim K."/>
            <person name="Fulton R.S."/>
            <person name="Fulton L.A."/>
            <person name="Clifton S.W."/>
            <person name="Wilson R.K."/>
            <person name="Knight R.D."/>
            <person name="Gordon J.I."/>
        </authorList>
    </citation>
    <scope>NUCLEOTIDE SEQUENCE [LARGE SCALE GENOMIC DNA]</scope>
    <source>
        <strain>ATCC 8503 / DSM 20701 / CIP 104284 / JCM 5825 / NCTC 11152</strain>
    </source>
</reference>
<name>SYE_PARD8</name>
<comment type="function">
    <text evidence="1">Catalyzes the attachment of glutamate to tRNA(Glu) in a two-step reaction: glutamate is first activated by ATP to form Glu-AMP and then transferred to the acceptor end of tRNA(Glu).</text>
</comment>
<comment type="catalytic activity">
    <reaction evidence="1">
        <text>tRNA(Glu) + L-glutamate + ATP = L-glutamyl-tRNA(Glu) + AMP + diphosphate</text>
        <dbReference type="Rhea" id="RHEA:23540"/>
        <dbReference type="Rhea" id="RHEA-COMP:9663"/>
        <dbReference type="Rhea" id="RHEA-COMP:9680"/>
        <dbReference type="ChEBI" id="CHEBI:29985"/>
        <dbReference type="ChEBI" id="CHEBI:30616"/>
        <dbReference type="ChEBI" id="CHEBI:33019"/>
        <dbReference type="ChEBI" id="CHEBI:78442"/>
        <dbReference type="ChEBI" id="CHEBI:78520"/>
        <dbReference type="ChEBI" id="CHEBI:456215"/>
        <dbReference type="EC" id="6.1.1.17"/>
    </reaction>
</comment>
<comment type="subunit">
    <text evidence="1">Monomer.</text>
</comment>
<comment type="subcellular location">
    <subcellularLocation>
        <location evidence="1">Cytoplasm</location>
    </subcellularLocation>
</comment>
<comment type="similarity">
    <text evidence="1">Belongs to the class-I aminoacyl-tRNA synthetase family. Glutamate--tRNA ligase type 1 subfamily.</text>
</comment>
<dbReference type="EC" id="6.1.1.17" evidence="1"/>
<dbReference type="EMBL" id="CP000140">
    <property type="protein sequence ID" value="ABR44015.1"/>
    <property type="molecule type" value="Genomic_DNA"/>
</dbReference>
<dbReference type="RefSeq" id="WP_008779982.1">
    <property type="nucleotide sequence ID" value="NC_009615.1"/>
</dbReference>
<dbReference type="SMR" id="A6LEA1"/>
<dbReference type="STRING" id="435591.BDI_2289"/>
<dbReference type="PaxDb" id="435591-BDI_2289"/>
<dbReference type="KEGG" id="pdi:BDI_2289"/>
<dbReference type="eggNOG" id="COG0008">
    <property type="taxonomic scope" value="Bacteria"/>
</dbReference>
<dbReference type="HOGENOM" id="CLU_015768_6_3_10"/>
<dbReference type="BioCyc" id="PDIS435591:G1G5A-2352-MONOMER"/>
<dbReference type="Proteomes" id="UP000000566">
    <property type="component" value="Chromosome"/>
</dbReference>
<dbReference type="GO" id="GO:0005829">
    <property type="term" value="C:cytosol"/>
    <property type="evidence" value="ECO:0007669"/>
    <property type="project" value="TreeGrafter"/>
</dbReference>
<dbReference type="GO" id="GO:0005524">
    <property type="term" value="F:ATP binding"/>
    <property type="evidence" value="ECO:0007669"/>
    <property type="project" value="UniProtKB-UniRule"/>
</dbReference>
<dbReference type="GO" id="GO:0004818">
    <property type="term" value="F:glutamate-tRNA ligase activity"/>
    <property type="evidence" value="ECO:0007669"/>
    <property type="project" value="UniProtKB-UniRule"/>
</dbReference>
<dbReference type="GO" id="GO:0000049">
    <property type="term" value="F:tRNA binding"/>
    <property type="evidence" value="ECO:0007669"/>
    <property type="project" value="InterPro"/>
</dbReference>
<dbReference type="GO" id="GO:0008270">
    <property type="term" value="F:zinc ion binding"/>
    <property type="evidence" value="ECO:0007669"/>
    <property type="project" value="InterPro"/>
</dbReference>
<dbReference type="GO" id="GO:0006424">
    <property type="term" value="P:glutamyl-tRNA aminoacylation"/>
    <property type="evidence" value="ECO:0007669"/>
    <property type="project" value="UniProtKB-UniRule"/>
</dbReference>
<dbReference type="CDD" id="cd00808">
    <property type="entry name" value="GluRS_core"/>
    <property type="match status" value="1"/>
</dbReference>
<dbReference type="FunFam" id="3.40.50.620:FF:000127">
    <property type="entry name" value="Glutamate--tRNA ligase"/>
    <property type="match status" value="1"/>
</dbReference>
<dbReference type="Gene3D" id="1.10.10.350">
    <property type="match status" value="1"/>
</dbReference>
<dbReference type="Gene3D" id="3.40.50.620">
    <property type="entry name" value="HUPs"/>
    <property type="match status" value="1"/>
</dbReference>
<dbReference type="HAMAP" id="MF_00022">
    <property type="entry name" value="Glu_tRNA_synth_type1"/>
    <property type="match status" value="1"/>
</dbReference>
<dbReference type="InterPro" id="IPR045462">
    <property type="entry name" value="aa-tRNA-synth_I_cd-bd"/>
</dbReference>
<dbReference type="InterPro" id="IPR020751">
    <property type="entry name" value="aa-tRNA-synth_I_codon-bd_sub2"/>
</dbReference>
<dbReference type="InterPro" id="IPR001412">
    <property type="entry name" value="aa-tRNA-synth_I_CS"/>
</dbReference>
<dbReference type="InterPro" id="IPR008925">
    <property type="entry name" value="aa_tRNA-synth_I_cd-bd_sf"/>
</dbReference>
<dbReference type="InterPro" id="IPR004527">
    <property type="entry name" value="Glu-tRNA-ligase_bac/mito"/>
</dbReference>
<dbReference type="InterPro" id="IPR000924">
    <property type="entry name" value="Glu/Gln-tRNA-synth"/>
</dbReference>
<dbReference type="InterPro" id="IPR020058">
    <property type="entry name" value="Glu/Gln-tRNA-synth_Ib_cat-dom"/>
</dbReference>
<dbReference type="InterPro" id="IPR049940">
    <property type="entry name" value="GluQ/Sye"/>
</dbReference>
<dbReference type="InterPro" id="IPR033910">
    <property type="entry name" value="GluRS_core"/>
</dbReference>
<dbReference type="InterPro" id="IPR014729">
    <property type="entry name" value="Rossmann-like_a/b/a_fold"/>
</dbReference>
<dbReference type="NCBIfam" id="TIGR00464">
    <property type="entry name" value="gltX_bact"/>
    <property type="match status" value="1"/>
</dbReference>
<dbReference type="PANTHER" id="PTHR43311">
    <property type="entry name" value="GLUTAMATE--TRNA LIGASE"/>
    <property type="match status" value="1"/>
</dbReference>
<dbReference type="PANTHER" id="PTHR43311:SF2">
    <property type="entry name" value="GLUTAMATE--TRNA LIGASE, MITOCHONDRIAL-RELATED"/>
    <property type="match status" value="1"/>
</dbReference>
<dbReference type="Pfam" id="PF19269">
    <property type="entry name" value="Anticodon_2"/>
    <property type="match status" value="1"/>
</dbReference>
<dbReference type="Pfam" id="PF00749">
    <property type="entry name" value="tRNA-synt_1c"/>
    <property type="match status" value="1"/>
</dbReference>
<dbReference type="PRINTS" id="PR00987">
    <property type="entry name" value="TRNASYNTHGLU"/>
</dbReference>
<dbReference type="SUPFAM" id="SSF48163">
    <property type="entry name" value="An anticodon-binding domain of class I aminoacyl-tRNA synthetases"/>
    <property type="match status" value="1"/>
</dbReference>
<dbReference type="SUPFAM" id="SSF52374">
    <property type="entry name" value="Nucleotidylyl transferase"/>
    <property type="match status" value="1"/>
</dbReference>
<dbReference type="PROSITE" id="PS00178">
    <property type="entry name" value="AA_TRNA_LIGASE_I"/>
    <property type="match status" value="1"/>
</dbReference>
<evidence type="ECO:0000255" key="1">
    <source>
        <dbReference type="HAMAP-Rule" id="MF_00022"/>
    </source>
</evidence>
<proteinExistence type="inferred from homology"/>
<gene>
    <name evidence="1" type="primary">gltX</name>
    <name type="ordered locus">BDI_2289</name>
</gene>
<feature type="chain" id="PRO_1000001928" description="Glutamate--tRNA ligase">
    <location>
        <begin position="1"/>
        <end position="505"/>
    </location>
</feature>
<feature type="short sequence motif" description="'HIGH' region" evidence="1">
    <location>
        <begin position="12"/>
        <end position="22"/>
    </location>
</feature>
<feature type="short sequence motif" description="'KMSKS' region" evidence="1">
    <location>
        <begin position="260"/>
        <end position="264"/>
    </location>
</feature>
<feature type="binding site" evidence="1">
    <location>
        <position position="263"/>
    </location>
    <ligand>
        <name>ATP</name>
        <dbReference type="ChEBI" id="CHEBI:30616"/>
    </ligand>
</feature>
<accession>A6LEA1</accession>
<protein>
    <recommendedName>
        <fullName evidence="1">Glutamate--tRNA ligase</fullName>
        <ecNumber evidence="1">6.1.1.17</ecNumber>
    </recommendedName>
    <alternativeName>
        <fullName evidence="1">Glutamyl-tRNA synthetase</fullName>
        <shortName evidence="1">GluRS</shortName>
    </alternativeName>
</protein>
<sequence>MTQRKVRVRFAPSPTGALHIGGVRTALYNYLFAKQNGGDMILRIEDTDSQRFVPGAEDYIIEALTWLGIKFDEGVSFGGNYGPYRQSERREIYKKYVDQLLNDGHAYIAFDTPAELEEKRKEIANFQYDASTRSQMRNSLTLSQEEVQSLIESGHQYVVRAKIEPNEDIHVNDLIRGEVVINSSILDDKVLYKSADQLPTYHLANIVDDHLMEVTHVIRGEEWLPSAPLHVLLYRFFGWEDTMPSFAHLSLLLKPEGNGKLSKRDGDRLGFPVFPLEWHDPKTGDVSSGYRESGYFPEAVVNFLALLGWNPGNDQEVMSMDDLIRLFDLSRCSKSGAKFDYEKGRWFNHHYLLEKSNAEIADLFLPIVESHGIQTTHAYVEKVVGMMKGRVNFVSELWDLCSFFFIAPTEYDEKTRKKRWKEDSAVQLGEFIEQLRAREPFDVEGTENECKAWIESKGYHLGNIMNAARLALVGEGKGPGIFDITEALGKEESIRRIQRAIEILK</sequence>